<feature type="chain" id="PRO_0000200065" description="Homeobox protein Hox-A5">
    <location>
        <begin position="1" status="less than"/>
        <end position="78"/>
    </location>
</feature>
<feature type="DNA-binding region" description="Homeobox" evidence="1">
    <location>
        <begin position="1"/>
        <end position="60"/>
    </location>
</feature>
<feature type="non-terminal residue">
    <location>
        <position position="1"/>
    </location>
</feature>
<sequence length="78" mass="9489">GRGRGQTYTRYQTLELEKEFHFNRYLTRRRRIEMAHALCLSERQIKIWFQNRRMKWKKDNKLKSMSMAAAGGVGYHRP</sequence>
<proteinExistence type="inferred from homology"/>
<comment type="function">
    <text>Sequence-specific transcription factor which is part of a developmental regulatory system that provides cells with specific positional identities on the anterior-posterior axis.</text>
</comment>
<comment type="subcellular location">
    <subcellularLocation>
        <location>Nucleus</location>
    </subcellularLocation>
</comment>
<comment type="similarity">
    <text evidence="2">Belongs to the Antp homeobox family.</text>
</comment>
<organism>
    <name type="scientific">Salmo salar</name>
    <name type="common">Atlantic salmon</name>
    <dbReference type="NCBI Taxonomy" id="8030"/>
    <lineage>
        <taxon>Eukaryota</taxon>
        <taxon>Metazoa</taxon>
        <taxon>Chordata</taxon>
        <taxon>Craniata</taxon>
        <taxon>Vertebrata</taxon>
        <taxon>Euteleostomi</taxon>
        <taxon>Actinopterygii</taxon>
        <taxon>Neopterygii</taxon>
        <taxon>Teleostei</taxon>
        <taxon>Protacanthopterygii</taxon>
        <taxon>Salmoniformes</taxon>
        <taxon>Salmonidae</taxon>
        <taxon>Salmoninae</taxon>
        <taxon>Salmo</taxon>
    </lineage>
</organism>
<reference key="1">
    <citation type="journal article" date="1988" name="Gene">
        <title>Molecular cloning and characterization of homeo-box-containing genes from Atlantic salmon.</title>
        <authorList>
            <person name="Fjose A."/>
            <person name="Molven A."/>
            <person name="Eiken H.G."/>
        </authorList>
    </citation>
    <scope>NUCLEOTIDE SEQUENCE [GENOMIC DNA]</scope>
</reference>
<name>HXA5_SALSA</name>
<keyword id="KW-0217">Developmental protein</keyword>
<keyword id="KW-0238">DNA-binding</keyword>
<keyword id="KW-0371">Homeobox</keyword>
<keyword id="KW-0539">Nucleus</keyword>
<keyword id="KW-1185">Reference proteome</keyword>
<keyword id="KW-0804">Transcription</keyword>
<keyword id="KW-0805">Transcription regulation</keyword>
<gene>
    <name type="primary">hoxa5</name>
</gene>
<protein>
    <recommendedName>
        <fullName>Homeobox protein Hox-A5</fullName>
    </recommendedName>
    <alternativeName>
        <fullName>S12-B</fullName>
    </alternativeName>
</protein>
<dbReference type="EMBL" id="M18904">
    <property type="protein sequence ID" value="AAA49560.1"/>
    <property type="molecule type" value="Genomic_DNA"/>
</dbReference>
<dbReference type="PIR" id="I51342">
    <property type="entry name" value="I51342"/>
</dbReference>
<dbReference type="SMR" id="P09637"/>
<dbReference type="STRING" id="8030.ENSSSAP00000075091"/>
<dbReference type="PaxDb" id="8030-ENSSSAP00000075091"/>
<dbReference type="Proteomes" id="UP000087266">
    <property type="component" value="Unplaced"/>
</dbReference>
<dbReference type="GO" id="GO:0005634">
    <property type="term" value="C:nucleus"/>
    <property type="evidence" value="ECO:0007669"/>
    <property type="project" value="UniProtKB-SubCell"/>
</dbReference>
<dbReference type="GO" id="GO:0000981">
    <property type="term" value="F:DNA-binding transcription factor activity, RNA polymerase II-specific"/>
    <property type="evidence" value="ECO:0007669"/>
    <property type="project" value="InterPro"/>
</dbReference>
<dbReference type="GO" id="GO:0000978">
    <property type="term" value="F:RNA polymerase II cis-regulatory region sequence-specific DNA binding"/>
    <property type="evidence" value="ECO:0007669"/>
    <property type="project" value="TreeGrafter"/>
</dbReference>
<dbReference type="GO" id="GO:0009952">
    <property type="term" value="P:anterior/posterior pattern specification"/>
    <property type="evidence" value="ECO:0007669"/>
    <property type="project" value="TreeGrafter"/>
</dbReference>
<dbReference type="CDD" id="cd00086">
    <property type="entry name" value="homeodomain"/>
    <property type="match status" value="1"/>
</dbReference>
<dbReference type="Gene3D" id="1.10.10.60">
    <property type="entry name" value="Homeodomain-like"/>
    <property type="match status" value="1"/>
</dbReference>
<dbReference type="InterPro" id="IPR050296">
    <property type="entry name" value="Antp_homeobox"/>
</dbReference>
<dbReference type="InterPro" id="IPR001356">
    <property type="entry name" value="HD"/>
</dbReference>
<dbReference type="InterPro" id="IPR020479">
    <property type="entry name" value="HD_metazoa"/>
</dbReference>
<dbReference type="InterPro" id="IPR017970">
    <property type="entry name" value="Homeobox_CS"/>
</dbReference>
<dbReference type="InterPro" id="IPR009057">
    <property type="entry name" value="Homeodomain-like_sf"/>
</dbReference>
<dbReference type="PANTHER" id="PTHR45659">
    <property type="entry name" value="HOMEOBOX PROTEIN HOX"/>
    <property type="match status" value="1"/>
</dbReference>
<dbReference type="PANTHER" id="PTHR45659:SF10">
    <property type="entry name" value="HOMEOBOX PROTEIN HOX-A5"/>
    <property type="match status" value="1"/>
</dbReference>
<dbReference type="Pfam" id="PF00046">
    <property type="entry name" value="Homeodomain"/>
    <property type="match status" value="1"/>
</dbReference>
<dbReference type="PRINTS" id="PR00024">
    <property type="entry name" value="HOMEOBOX"/>
</dbReference>
<dbReference type="SMART" id="SM00389">
    <property type="entry name" value="HOX"/>
    <property type="match status" value="1"/>
</dbReference>
<dbReference type="SUPFAM" id="SSF46689">
    <property type="entry name" value="Homeodomain-like"/>
    <property type="match status" value="1"/>
</dbReference>
<dbReference type="PROSITE" id="PS00027">
    <property type="entry name" value="HOMEOBOX_1"/>
    <property type="match status" value="1"/>
</dbReference>
<dbReference type="PROSITE" id="PS50071">
    <property type="entry name" value="HOMEOBOX_2"/>
    <property type="match status" value="1"/>
</dbReference>
<evidence type="ECO:0000255" key="1">
    <source>
        <dbReference type="PROSITE-ProRule" id="PRU00108"/>
    </source>
</evidence>
<evidence type="ECO:0000305" key="2"/>
<accession>P09637</accession>